<evidence type="ECO:0000250" key="1"/>
<evidence type="ECO:0000305" key="2"/>
<gene>
    <name type="primary">rpsS</name>
    <name type="ordered locus">c4083</name>
</gene>
<sequence length="92" mass="10430">MPRSLKKGPFIDLHLLKKVEKAVESGDKKPLRTWSRRSTIFPNMIGLTIAVHNGRQHVPVFVTDEMVGHKLGEFAPTRTYRGHAADKKAKKK</sequence>
<dbReference type="EMBL" id="AE014075">
    <property type="protein sequence ID" value="AAN82521.1"/>
    <property type="molecule type" value="Genomic_DNA"/>
</dbReference>
<dbReference type="RefSeq" id="WP_001138117.1">
    <property type="nucleotide sequence ID" value="NZ_CP051263.1"/>
</dbReference>
<dbReference type="SMR" id="P0A7U4"/>
<dbReference type="STRING" id="199310.c4083"/>
<dbReference type="GeneID" id="98390438"/>
<dbReference type="KEGG" id="ecc:c4083"/>
<dbReference type="eggNOG" id="COG0185">
    <property type="taxonomic scope" value="Bacteria"/>
</dbReference>
<dbReference type="HOGENOM" id="CLU_144911_0_1_6"/>
<dbReference type="BioCyc" id="ECOL199310:C4083-MONOMER"/>
<dbReference type="Proteomes" id="UP000001410">
    <property type="component" value="Chromosome"/>
</dbReference>
<dbReference type="GO" id="GO:0005737">
    <property type="term" value="C:cytoplasm"/>
    <property type="evidence" value="ECO:0007669"/>
    <property type="project" value="UniProtKB-ARBA"/>
</dbReference>
<dbReference type="GO" id="GO:0015935">
    <property type="term" value="C:small ribosomal subunit"/>
    <property type="evidence" value="ECO:0007669"/>
    <property type="project" value="InterPro"/>
</dbReference>
<dbReference type="GO" id="GO:0019843">
    <property type="term" value="F:rRNA binding"/>
    <property type="evidence" value="ECO:0007669"/>
    <property type="project" value="UniProtKB-UniRule"/>
</dbReference>
<dbReference type="GO" id="GO:0003735">
    <property type="term" value="F:structural constituent of ribosome"/>
    <property type="evidence" value="ECO:0007669"/>
    <property type="project" value="InterPro"/>
</dbReference>
<dbReference type="GO" id="GO:0000049">
    <property type="term" value="F:tRNA binding"/>
    <property type="evidence" value="ECO:0007669"/>
    <property type="project" value="UniProtKB-KW"/>
</dbReference>
<dbReference type="GO" id="GO:0000028">
    <property type="term" value="P:ribosomal small subunit assembly"/>
    <property type="evidence" value="ECO:0007669"/>
    <property type="project" value="TreeGrafter"/>
</dbReference>
<dbReference type="GO" id="GO:0006412">
    <property type="term" value="P:translation"/>
    <property type="evidence" value="ECO:0007669"/>
    <property type="project" value="UniProtKB-UniRule"/>
</dbReference>
<dbReference type="FunFam" id="3.30.860.10:FF:000001">
    <property type="entry name" value="30S ribosomal protein S19"/>
    <property type="match status" value="1"/>
</dbReference>
<dbReference type="Gene3D" id="3.30.860.10">
    <property type="entry name" value="30s Ribosomal Protein S19, Chain A"/>
    <property type="match status" value="1"/>
</dbReference>
<dbReference type="HAMAP" id="MF_00531">
    <property type="entry name" value="Ribosomal_uS19"/>
    <property type="match status" value="1"/>
</dbReference>
<dbReference type="InterPro" id="IPR002222">
    <property type="entry name" value="Ribosomal_uS19"/>
</dbReference>
<dbReference type="InterPro" id="IPR005732">
    <property type="entry name" value="Ribosomal_uS19_bac-type"/>
</dbReference>
<dbReference type="InterPro" id="IPR020934">
    <property type="entry name" value="Ribosomal_uS19_CS"/>
</dbReference>
<dbReference type="InterPro" id="IPR023575">
    <property type="entry name" value="Ribosomal_uS19_SF"/>
</dbReference>
<dbReference type="NCBIfam" id="TIGR01050">
    <property type="entry name" value="rpsS_bact"/>
    <property type="match status" value="1"/>
</dbReference>
<dbReference type="PANTHER" id="PTHR11880">
    <property type="entry name" value="RIBOSOMAL PROTEIN S19P FAMILY MEMBER"/>
    <property type="match status" value="1"/>
</dbReference>
<dbReference type="PANTHER" id="PTHR11880:SF8">
    <property type="entry name" value="SMALL RIBOSOMAL SUBUNIT PROTEIN US19M"/>
    <property type="match status" value="1"/>
</dbReference>
<dbReference type="Pfam" id="PF00203">
    <property type="entry name" value="Ribosomal_S19"/>
    <property type="match status" value="1"/>
</dbReference>
<dbReference type="PIRSF" id="PIRSF002144">
    <property type="entry name" value="Ribosomal_S19"/>
    <property type="match status" value="1"/>
</dbReference>
<dbReference type="PRINTS" id="PR00975">
    <property type="entry name" value="RIBOSOMALS19"/>
</dbReference>
<dbReference type="SUPFAM" id="SSF54570">
    <property type="entry name" value="Ribosomal protein S19"/>
    <property type="match status" value="1"/>
</dbReference>
<dbReference type="PROSITE" id="PS00323">
    <property type="entry name" value="RIBOSOMAL_S19"/>
    <property type="match status" value="1"/>
</dbReference>
<reference key="1">
    <citation type="journal article" date="2002" name="Proc. Natl. Acad. Sci. U.S.A.">
        <title>Extensive mosaic structure revealed by the complete genome sequence of uropathogenic Escherichia coli.</title>
        <authorList>
            <person name="Welch R.A."/>
            <person name="Burland V."/>
            <person name="Plunkett G. III"/>
            <person name="Redford P."/>
            <person name="Roesch P."/>
            <person name="Rasko D."/>
            <person name="Buckles E.L."/>
            <person name="Liou S.-R."/>
            <person name="Boutin A."/>
            <person name="Hackett J."/>
            <person name="Stroud D."/>
            <person name="Mayhew G.F."/>
            <person name="Rose D.J."/>
            <person name="Zhou S."/>
            <person name="Schwartz D.C."/>
            <person name="Perna N.T."/>
            <person name="Mobley H.L.T."/>
            <person name="Donnenberg M.S."/>
            <person name="Blattner F.R."/>
        </authorList>
    </citation>
    <scope>NUCLEOTIDE SEQUENCE [LARGE SCALE GENOMIC DNA]</scope>
    <source>
        <strain>CFT073 / ATCC 700928 / UPEC</strain>
    </source>
</reference>
<feature type="initiator methionine" description="Removed" evidence="1">
    <location>
        <position position="1"/>
    </location>
</feature>
<feature type="chain" id="PRO_0000129820" description="Small ribosomal subunit protein uS19">
    <location>
        <begin position="2"/>
        <end position="92"/>
    </location>
</feature>
<organism>
    <name type="scientific">Escherichia coli O6:H1 (strain CFT073 / ATCC 700928 / UPEC)</name>
    <dbReference type="NCBI Taxonomy" id="199310"/>
    <lineage>
        <taxon>Bacteria</taxon>
        <taxon>Pseudomonadati</taxon>
        <taxon>Pseudomonadota</taxon>
        <taxon>Gammaproteobacteria</taxon>
        <taxon>Enterobacterales</taxon>
        <taxon>Enterobacteriaceae</taxon>
        <taxon>Escherichia</taxon>
    </lineage>
</organism>
<protein>
    <recommendedName>
        <fullName evidence="2">Small ribosomal subunit protein uS19</fullName>
    </recommendedName>
    <alternativeName>
        <fullName>30S ribosomal protein S19</fullName>
    </alternativeName>
</protein>
<keyword id="KW-1185">Reference proteome</keyword>
<keyword id="KW-0687">Ribonucleoprotein</keyword>
<keyword id="KW-0689">Ribosomal protein</keyword>
<keyword id="KW-0694">RNA-binding</keyword>
<keyword id="KW-0699">rRNA-binding</keyword>
<keyword id="KW-0820">tRNA-binding</keyword>
<comment type="function">
    <text evidence="1">Protein S19 forms a complex with S13 that binds strongly to the 16S ribosomal RNA.</text>
</comment>
<comment type="similarity">
    <text evidence="2">Belongs to the universal ribosomal protein uS19 family.</text>
</comment>
<proteinExistence type="inferred from homology"/>
<name>RS19_ECOL6</name>
<accession>P0A7U4</accession>
<accession>P02375</accession>